<proteinExistence type="inferred from homology"/>
<feature type="chain" id="PRO_0000335206" description="DNA mismatch repair protein MutS">
    <location>
        <begin position="1"/>
        <end position="1040"/>
    </location>
</feature>
<feature type="region of interest" description="Disordered" evidence="2">
    <location>
        <begin position="1"/>
        <end position="22"/>
    </location>
</feature>
<feature type="region of interest" description="Disordered" evidence="2">
    <location>
        <begin position="130"/>
        <end position="157"/>
    </location>
</feature>
<feature type="compositionally biased region" description="Polar residues" evidence="2">
    <location>
        <begin position="1"/>
        <end position="10"/>
    </location>
</feature>
<feature type="compositionally biased region" description="Low complexity" evidence="2">
    <location>
        <begin position="11"/>
        <end position="22"/>
    </location>
</feature>
<feature type="compositionally biased region" description="Polar residues" evidence="2">
    <location>
        <begin position="130"/>
        <end position="143"/>
    </location>
</feature>
<feature type="binding site" evidence="1">
    <location>
        <begin position="759"/>
        <end position="766"/>
    </location>
    <ligand>
        <name>ATP</name>
        <dbReference type="ChEBI" id="CHEBI:30616"/>
    </ligand>
</feature>
<protein>
    <recommendedName>
        <fullName evidence="1">DNA mismatch repair protein MutS</fullName>
    </recommendedName>
</protein>
<name>MUTS_PSYCK</name>
<reference key="1">
    <citation type="submission" date="2006-03" db="EMBL/GenBank/DDBJ databases">
        <title>Complete sequence of chromosome of Psychrobacter cryohalolentis K5.</title>
        <authorList>
            <consortium name="US DOE Joint Genome Institute"/>
            <person name="Copeland A."/>
            <person name="Lucas S."/>
            <person name="Lapidus A."/>
            <person name="Barry K."/>
            <person name="Detter J.C."/>
            <person name="Glavina T."/>
            <person name="Hammon N."/>
            <person name="Israni S."/>
            <person name="Dalin E."/>
            <person name="Tice H."/>
            <person name="Pitluck S."/>
            <person name="Brettin T."/>
            <person name="Bruce D."/>
            <person name="Han C."/>
            <person name="Tapia R."/>
            <person name="Sims D.R."/>
            <person name="Gilna P."/>
            <person name="Schmutz J."/>
            <person name="Larimer F."/>
            <person name="Land M."/>
            <person name="Hauser L."/>
            <person name="Kyrpides N."/>
            <person name="Kim E."/>
            <person name="Richardson P."/>
        </authorList>
    </citation>
    <scope>NUCLEOTIDE SEQUENCE [LARGE SCALE GENOMIC DNA]</scope>
    <source>
        <strain>ATCC BAA-1226 / DSM 17306 / VKM B-2378 / K5</strain>
    </source>
</reference>
<evidence type="ECO:0000255" key="1">
    <source>
        <dbReference type="HAMAP-Rule" id="MF_00096"/>
    </source>
</evidence>
<evidence type="ECO:0000256" key="2">
    <source>
        <dbReference type="SAM" id="MobiDB-lite"/>
    </source>
</evidence>
<keyword id="KW-0067">ATP-binding</keyword>
<keyword id="KW-0227">DNA damage</keyword>
<keyword id="KW-0234">DNA repair</keyword>
<keyword id="KW-0238">DNA-binding</keyword>
<keyword id="KW-0547">Nucleotide-binding</keyword>
<gene>
    <name evidence="1" type="primary">mutS</name>
    <name type="ordered locus">Pcryo_0273</name>
</gene>
<comment type="function">
    <text evidence="1">This protein is involved in the repair of mismatches in DNA. It is possible that it carries out the mismatch recognition step. This protein has a weak ATPase activity.</text>
</comment>
<comment type="similarity">
    <text evidence="1">Belongs to the DNA mismatch repair MutS family.</text>
</comment>
<organism>
    <name type="scientific">Psychrobacter cryohalolentis (strain ATCC BAA-1226 / DSM 17306 / VKM B-2378 / K5)</name>
    <dbReference type="NCBI Taxonomy" id="335284"/>
    <lineage>
        <taxon>Bacteria</taxon>
        <taxon>Pseudomonadati</taxon>
        <taxon>Pseudomonadota</taxon>
        <taxon>Gammaproteobacteria</taxon>
        <taxon>Moraxellales</taxon>
        <taxon>Moraxellaceae</taxon>
        <taxon>Psychrobacter</taxon>
    </lineage>
</organism>
<dbReference type="EMBL" id="CP000323">
    <property type="protein sequence ID" value="ABE74057.1"/>
    <property type="molecule type" value="Genomic_DNA"/>
</dbReference>
<dbReference type="RefSeq" id="WP_011512645.1">
    <property type="nucleotide sequence ID" value="NC_007969.1"/>
</dbReference>
<dbReference type="SMR" id="Q1QE46"/>
<dbReference type="STRING" id="335284.Pcryo_0273"/>
<dbReference type="KEGG" id="pcr:Pcryo_0273"/>
<dbReference type="eggNOG" id="COG0249">
    <property type="taxonomic scope" value="Bacteria"/>
</dbReference>
<dbReference type="HOGENOM" id="CLU_002472_4_1_6"/>
<dbReference type="Proteomes" id="UP000002425">
    <property type="component" value="Chromosome"/>
</dbReference>
<dbReference type="GO" id="GO:0005829">
    <property type="term" value="C:cytosol"/>
    <property type="evidence" value="ECO:0007669"/>
    <property type="project" value="TreeGrafter"/>
</dbReference>
<dbReference type="GO" id="GO:0005524">
    <property type="term" value="F:ATP binding"/>
    <property type="evidence" value="ECO:0007669"/>
    <property type="project" value="UniProtKB-UniRule"/>
</dbReference>
<dbReference type="GO" id="GO:0140664">
    <property type="term" value="F:ATP-dependent DNA damage sensor activity"/>
    <property type="evidence" value="ECO:0007669"/>
    <property type="project" value="InterPro"/>
</dbReference>
<dbReference type="GO" id="GO:0003684">
    <property type="term" value="F:damaged DNA binding"/>
    <property type="evidence" value="ECO:0007669"/>
    <property type="project" value="UniProtKB-UniRule"/>
</dbReference>
<dbReference type="GO" id="GO:0030983">
    <property type="term" value="F:mismatched DNA binding"/>
    <property type="evidence" value="ECO:0007669"/>
    <property type="project" value="InterPro"/>
</dbReference>
<dbReference type="GO" id="GO:0006298">
    <property type="term" value="P:mismatch repair"/>
    <property type="evidence" value="ECO:0007669"/>
    <property type="project" value="UniProtKB-UniRule"/>
</dbReference>
<dbReference type="Gene3D" id="1.10.1420.10">
    <property type="match status" value="2"/>
</dbReference>
<dbReference type="Gene3D" id="6.10.140.430">
    <property type="match status" value="1"/>
</dbReference>
<dbReference type="Gene3D" id="3.40.1170.10">
    <property type="entry name" value="DNA repair protein MutS, domain I"/>
    <property type="match status" value="1"/>
</dbReference>
<dbReference type="Gene3D" id="3.30.420.110">
    <property type="entry name" value="MutS, connector domain"/>
    <property type="match status" value="1"/>
</dbReference>
<dbReference type="Gene3D" id="3.40.50.300">
    <property type="entry name" value="P-loop containing nucleotide triphosphate hydrolases"/>
    <property type="match status" value="1"/>
</dbReference>
<dbReference type="HAMAP" id="MF_00096">
    <property type="entry name" value="MutS"/>
    <property type="match status" value="1"/>
</dbReference>
<dbReference type="InterPro" id="IPR005748">
    <property type="entry name" value="DNA_mismatch_repair_MutS"/>
</dbReference>
<dbReference type="InterPro" id="IPR007695">
    <property type="entry name" value="DNA_mismatch_repair_MutS-lik_N"/>
</dbReference>
<dbReference type="InterPro" id="IPR017261">
    <property type="entry name" value="DNA_mismatch_repair_MutS/MSH"/>
</dbReference>
<dbReference type="InterPro" id="IPR000432">
    <property type="entry name" value="DNA_mismatch_repair_MutS_C"/>
</dbReference>
<dbReference type="InterPro" id="IPR007861">
    <property type="entry name" value="DNA_mismatch_repair_MutS_clamp"/>
</dbReference>
<dbReference type="InterPro" id="IPR007696">
    <property type="entry name" value="DNA_mismatch_repair_MutS_core"/>
</dbReference>
<dbReference type="InterPro" id="IPR016151">
    <property type="entry name" value="DNA_mismatch_repair_MutS_N"/>
</dbReference>
<dbReference type="InterPro" id="IPR036187">
    <property type="entry name" value="DNA_mismatch_repair_MutS_sf"/>
</dbReference>
<dbReference type="InterPro" id="IPR007860">
    <property type="entry name" value="DNA_mmatch_repair_MutS_con_dom"/>
</dbReference>
<dbReference type="InterPro" id="IPR045076">
    <property type="entry name" value="MutS"/>
</dbReference>
<dbReference type="InterPro" id="IPR036678">
    <property type="entry name" value="MutS_con_dom_sf"/>
</dbReference>
<dbReference type="InterPro" id="IPR027417">
    <property type="entry name" value="P-loop_NTPase"/>
</dbReference>
<dbReference type="NCBIfam" id="NF003810">
    <property type="entry name" value="PRK05399.1"/>
    <property type="match status" value="1"/>
</dbReference>
<dbReference type="PANTHER" id="PTHR11361:SF34">
    <property type="entry name" value="DNA MISMATCH REPAIR PROTEIN MSH1, MITOCHONDRIAL"/>
    <property type="match status" value="1"/>
</dbReference>
<dbReference type="PANTHER" id="PTHR11361">
    <property type="entry name" value="DNA MISMATCH REPAIR PROTEIN MUTS FAMILY MEMBER"/>
    <property type="match status" value="1"/>
</dbReference>
<dbReference type="Pfam" id="PF01624">
    <property type="entry name" value="MutS_I"/>
    <property type="match status" value="1"/>
</dbReference>
<dbReference type="Pfam" id="PF05188">
    <property type="entry name" value="MutS_II"/>
    <property type="match status" value="1"/>
</dbReference>
<dbReference type="Pfam" id="PF05192">
    <property type="entry name" value="MutS_III"/>
    <property type="match status" value="1"/>
</dbReference>
<dbReference type="Pfam" id="PF05190">
    <property type="entry name" value="MutS_IV"/>
    <property type="match status" value="1"/>
</dbReference>
<dbReference type="Pfam" id="PF00488">
    <property type="entry name" value="MutS_V"/>
    <property type="match status" value="1"/>
</dbReference>
<dbReference type="PIRSF" id="PIRSF037677">
    <property type="entry name" value="DNA_mis_repair_Msh6"/>
    <property type="match status" value="1"/>
</dbReference>
<dbReference type="SMART" id="SM00534">
    <property type="entry name" value="MUTSac"/>
    <property type="match status" value="1"/>
</dbReference>
<dbReference type="SMART" id="SM00533">
    <property type="entry name" value="MUTSd"/>
    <property type="match status" value="1"/>
</dbReference>
<dbReference type="SUPFAM" id="SSF55271">
    <property type="entry name" value="DNA repair protein MutS, domain I"/>
    <property type="match status" value="1"/>
</dbReference>
<dbReference type="SUPFAM" id="SSF53150">
    <property type="entry name" value="DNA repair protein MutS, domain II"/>
    <property type="match status" value="1"/>
</dbReference>
<dbReference type="SUPFAM" id="SSF48334">
    <property type="entry name" value="DNA repair protein MutS, domain III"/>
    <property type="match status" value="1"/>
</dbReference>
<dbReference type="SUPFAM" id="SSF52540">
    <property type="entry name" value="P-loop containing nucleoside triphosphate hydrolases"/>
    <property type="match status" value="1"/>
</dbReference>
<dbReference type="PROSITE" id="PS00486">
    <property type="entry name" value="DNA_MISMATCH_REPAIR_2"/>
    <property type="match status" value="1"/>
</dbReference>
<accession>Q1QE46</accession>
<sequence length="1040" mass="114553">MPVKPSAQNNSPSKPTSKSVPVDSDSLVIGDAIYHLADHTPMMVQYLNMKVNYPQALLLYRMGDFYELFFEDAKRAAQILDITLTRRGTDKAGNTIAMAGVPFHAADSYMARLIAAGQTVVVCEQIDESATGTDNANNPSNAPTMGDKQKKDKSKSTAGTIMRREVVKTLTAGTITDDALIAPNHTPTVVAIDIETPKSNSKQPVQAAVSQMDLAAGTLTTQTISANQDDIESLQTQMLTVLARFAPSECIISEALSDSNGDISEEWLLWLRQHLNCPIIEVAANDFHREHASATLCQQFEVQRLDGLGISGAPLAQSSCAALIHYARQTQQRHVPQLNQLIVEYNDDYLIIDANSQQNLELFTPVSSNGTSLISVLNHCQTPMGRRLLVQQMKRPLRQHSRINLRLDAITSLLDTDKQSEQCSGNISLVTSLRETLNAIGDIERISSRIGLMSAKPRDLRKLADGIASSAQLTTLLTNAGISHEQAGLLPMLMQQLPAQLPAVQSVAELIERAIIVEPPAHIRDGGMLAAGYDAEFDRLTHLHDNIQVTLDEMVERARQESQLPSLKVGFNKVSGFYFELPKMQAKNAPAHFIRRQTLKSSERFITNELKTVETEYLSAQSLALTREKQLYNELLIRLGSHLAELQQLSAAIAQIDVLNNWAQLAITYNWQRPVMSNESKKSSILDNSLENSHSENGLNNNSQTSINIKEGRHVVVEAVLNPIHTHQNNPAKHSSHFVANDCVLGSYENPERLLMITGPNMGGKSTYMRQTALIVLLAHCGSFVPAARAHIGDIDRIFTRIGSADDLAGGKSTFMVEMIETANILNQATNKSLVLMDEVGRGTATTDGLAIAHACVNRLVEIGCLTLFATHYFELTKLAQNPKESSGSNDKFIRNVHVAASEIDGQLLLLHQIKDGAASSSFGLHVAKMAGIPIQVLNDAKRYLVDNLSIDNLKPDNESIDDDKNELAKSVKDKRQQTYDSNIEKSNIRNLDKKQKNIDIPQQNQLFSLQDELQAIDPDSLTPKQAHDLLYHLKEIISY</sequence>